<protein>
    <recommendedName>
        <fullName evidence="1">Endoribonuclease YbeY</fullName>
        <ecNumber evidence="1">3.1.-.-</ecNumber>
    </recommendedName>
</protein>
<sequence length="156" mass="18062">MSLLIDFIDETEEVKEEYVNLIREILGKAAQMEKIEDGAELSVTFVDNERIREINRDYRDKDQPTDVISFAMEEMGEGEMEIVGVEMPRMLGDLIISIPRAKEQAEEYGHSFDRELGFLALHGFLHLLGYDHMTEEDEKEMFGRQKEILEAFGLGR</sequence>
<organism>
    <name type="scientific">Bacillus cereus (strain AH187)</name>
    <dbReference type="NCBI Taxonomy" id="405534"/>
    <lineage>
        <taxon>Bacteria</taxon>
        <taxon>Bacillati</taxon>
        <taxon>Bacillota</taxon>
        <taxon>Bacilli</taxon>
        <taxon>Bacillales</taxon>
        <taxon>Bacillaceae</taxon>
        <taxon>Bacillus</taxon>
        <taxon>Bacillus cereus group</taxon>
    </lineage>
</organism>
<comment type="function">
    <text evidence="1">Single strand-specific metallo-endoribonuclease involved in late-stage 70S ribosome quality control and in maturation of the 3' terminus of the 16S rRNA.</text>
</comment>
<comment type="cofactor">
    <cofactor evidence="1">
        <name>Zn(2+)</name>
        <dbReference type="ChEBI" id="CHEBI:29105"/>
    </cofactor>
    <text evidence="1">Binds 1 zinc ion.</text>
</comment>
<comment type="subcellular location">
    <subcellularLocation>
        <location evidence="1">Cytoplasm</location>
    </subcellularLocation>
</comment>
<comment type="similarity">
    <text evidence="1">Belongs to the endoribonuclease YbeY family.</text>
</comment>
<keyword id="KW-0963">Cytoplasm</keyword>
<keyword id="KW-0255">Endonuclease</keyword>
<keyword id="KW-0378">Hydrolase</keyword>
<keyword id="KW-0479">Metal-binding</keyword>
<keyword id="KW-0540">Nuclease</keyword>
<keyword id="KW-0690">Ribosome biogenesis</keyword>
<keyword id="KW-0698">rRNA processing</keyword>
<keyword id="KW-0862">Zinc</keyword>
<evidence type="ECO:0000255" key="1">
    <source>
        <dbReference type="HAMAP-Rule" id="MF_00009"/>
    </source>
</evidence>
<reference key="1">
    <citation type="submission" date="2008-10" db="EMBL/GenBank/DDBJ databases">
        <title>Genome sequence of Bacillus cereus AH187.</title>
        <authorList>
            <person name="Dodson R.J."/>
            <person name="Durkin A.S."/>
            <person name="Rosovitz M.J."/>
            <person name="Rasko D.A."/>
            <person name="Kolsto A.B."/>
            <person name="Okstad O.A."/>
            <person name="Ravel J."/>
            <person name="Sutton G."/>
        </authorList>
    </citation>
    <scope>NUCLEOTIDE SEQUENCE [LARGE SCALE GENOMIC DNA]</scope>
    <source>
        <strain>AH187</strain>
    </source>
</reference>
<feature type="chain" id="PRO_1000199949" description="Endoribonuclease YbeY">
    <location>
        <begin position="1"/>
        <end position="156"/>
    </location>
</feature>
<feature type="binding site" evidence="1">
    <location>
        <position position="122"/>
    </location>
    <ligand>
        <name>Zn(2+)</name>
        <dbReference type="ChEBI" id="CHEBI:29105"/>
        <note>catalytic</note>
    </ligand>
</feature>
<feature type="binding site" evidence="1">
    <location>
        <position position="126"/>
    </location>
    <ligand>
        <name>Zn(2+)</name>
        <dbReference type="ChEBI" id="CHEBI:29105"/>
        <note>catalytic</note>
    </ligand>
</feature>
<feature type="binding site" evidence="1">
    <location>
        <position position="132"/>
    </location>
    <ligand>
        <name>Zn(2+)</name>
        <dbReference type="ChEBI" id="CHEBI:29105"/>
        <note>catalytic</note>
    </ligand>
</feature>
<accession>B7HPK2</accession>
<name>YBEY_BACC7</name>
<dbReference type="EC" id="3.1.-.-" evidence="1"/>
<dbReference type="EMBL" id="CP001177">
    <property type="protein sequence ID" value="ACJ80553.1"/>
    <property type="molecule type" value="Genomic_DNA"/>
</dbReference>
<dbReference type="SMR" id="B7HPK2"/>
<dbReference type="KEGG" id="bcr:BCAH187_A4436"/>
<dbReference type="HOGENOM" id="CLU_106710_3_0_9"/>
<dbReference type="Proteomes" id="UP000002214">
    <property type="component" value="Chromosome"/>
</dbReference>
<dbReference type="GO" id="GO:0005737">
    <property type="term" value="C:cytoplasm"/>
    <property type="evidence" value="ECO:0007669"/>
    <property type="project" value="UniProtKB-SubCell"/>
</dbReference>
<dbReference type="GO" id="GO:0004222">
    <property type="term" value="F:metalloendopeptidase activity"/>
    <property type="evidence" value="ECO:0007669"/>
    <property type="project" value="InterPro"/>
</dbReference>
<dbReference type="GO" id="GO:0004521">
    <property type="term" value="F:RNA endonuclease activity"/>
    <property type="evidence" value="ECO:0007669"/>
    <property type="project" value="UniProtKB-UniRule"/>
</dbReference>
<dbReference type="GO" id="GO:0008270">
    <property type="term" value="F:zinc ion binding"/>
    <property type="evidence" value="ECO:0007669"/>
    <property type="project" value="UniProtKB-UniRule"/>
</dbReference>
<dbReference type="GO" id="GO:0006364">
    <property type="term" value="P:rRNA processing"/>
    <property type="evidence" value="ECO:0007669"/>
    <property type="project" value="UniProtKB-UniRule"/>
</dbReference>
<dbReference type="Gene3D" id="3.40.390.30">
    <property type="entry name" value="Metalloproteases ('zincins'), catalytic domain"/>
    <property type="match status" value="1"/>
</dbReference>
<dbReference type="HAMAP" id="MF_00009">
    <property type="entry name" value="Endoribonucl_YbeY"/>
    <property type="match status" value="1"/>
</dbReference>
<dbReference type="InterPro" id="IPR023091">
    <property type="entry name" value="MetalPrtase_cat_dom_sf_prd"/>
</dbReference>
<dbReference type="InterPro" id="IPR002036">
    <property type="entry name" value="YbeY"/>
</dbReference>
<dbReference type="InterPro" id="IPR020549">
    <property type="entry name" value="YbeY_CS"/>
</dbReference>
<dbReference type="NCBIfam" id="TIGR00043">
    <property type="entry name" value="rRNA maturation RNase YbeY"/>
    <property type="match status" value="1"/>
</dbReference>
<dbReference type="PANTHER" id="PTHR46986">
    <property type="entry name" value="ENDORIBONUCLEASE YBEY, CHLOROPLASTIC"/>
    <property type="match status" value="1"/>
</dbReference>
<dbReference type="PANTHER" id="PTHR46986:SF1">
    <property type="entry name" value="ENDORIBONUCLEASE YBEY, CHLOROPLASTIC"/>
    <property type="match status" value="1"/>
</dbReference>
<dbReference type="Pfam" id="PF02130">
    <property type="entry name" value="YbeY"/>
    <property type="match status" value="1"/>
</dbReference>
<dbReference type="SUPFAM" id="SSF55486">
    <property type="entry name" value="Metalloproteases ('zincins'), catalytic domain"/>
    <property type="match status" value="1"/>
</dbReference>
<dbReference type="PROSITE" id="PS01306">
    <property type="entry name" value="UPF0054"/>
    <property type="match status" value="1"/>
</dbReference>
<proteinExistence type="inferred from homology"/>
<gene>
    <name evidence="1" type="primary">ybeY</name>
    <name type="ordered locus">BCAH187_A4436</name>
</gene>